<protein>
    <recommendedName>
        <fullName>Antitoxin MazE</fullName>
    </recommendedName>
</protein>
<accession>Q4L7V4</accession>
<sequence length="56" mass="6380">MLTFNQNRSHSLEQSLKEGYAQMAELNLSLATEAFPLECEACDCNETYLISNYKSE</sequence>
<keyword id="KW-1277">Toxin-antitoxin system</keyword>
<gene>
    <name type="primary">mazE</name>
    <name type="ordered locus">SH0962</name>
</gene>
<organism>
    <name type="scientific">Staphylococcus haemolyticus (strain JCSC1435)</name>
    <dbReference type="NCBI Taxonomy" id="279808"/>
    <lineage>
        <taxon>Bacteria</taxon>
        <taxon>Bacillati</taxon>
        <taxon>Bacillota</taxon>
        <taxon>Bacilli</taxon>
        <taxon>Bacillales</taxon>
        <taxon>Staphylococcaceae</taxon>
        <taxon>Staphylococcus</taxon>
    </lineage>
</organism>
<comment type="function">
    <text evidence="1">Antitoxin component of a type II toxin-antitoxin (TA) system. Labile antitoxin that binds to cognate MazF toxin and counteracts its endoribonuclease activity.</text>
</comment>
<comment type="subunit">
    <text evidence="1">Forms a complex with cognate toxin MazF which inhibits the endoribonuclease activity of MazF.</text>
</comment>
<comment type="similarity">
    <text evidence="2">Belongs to the MazE/EndoAI family.</text>
</comment>
<feature type="chain" id="PRO_0000330723" description="Antitoxin MazE">
    <location>
        <begin position="1"/>
        <end position="56"/>
    </location>
</feature>
<dbReference type="EMBL" id="AP006716">
    <property type="protein sequence ID" value="BAE04271.1"/>
    <property type="molecule type" value="Genomic_DNA"/>
</dbReference>
<dbReference type="RefSeq" id="WP_011275271.1">
    <property type="nucleotide sequence ID" value="NC_007168.1"/>
</dbReference>
<dbReference type="SMR" id="Q4L7V4"/>
<dbReference type="GeneID" id="93780349"/>
<dbReference type="KEGG" id="sha:SH0962"/>
<dbReference type="eggNOG" id="ENOG50305BV">
    <property type="taxonomic scope" value="Bacteria"/>
</dbReference>
<dbReference type="HOGENOM" id="CLU_3012108_0_0_9"/>
<dbReference type="OrthoDB" id="2418545at2"/>
<dbReference type="Proteomes" id="UP000000543">
    <property type="component" value="Chromosome"/>
</dbReference>
<dbReference type="GO" id="GO:0006355">
    <property type="term" value="P:regulation of DNA-templated transcription"/>
    <property type="evidence" value="ECO:0007669"/>
    <property type="project" value="InterPro"/>
</dbReference>
<dbReference type="Gene3D" id="1.10.1220.10">
    <property type="entry name" value="Met repressor-like"/>
    <property type="match status" value="1"/>
</dbReference>
<dbReference type="InterPro" id="IPR013321">
    <property type="entry name" value="Arc_rbn_hlx_hlx"/>
</dbReference>
<dbReference type="InterPro" id="IPR048242">
    <property type="entry name" value="MazE"/>
</dbReference>
<dbReference type="NCBIfam" id="NF041459">
    <property type="entry name" value="antitoxMazE_Staph"/>
    <property type="match status" value="1"/>
</dbReference>
<evidence type="ECO:0000250" key="1">
    <source>
        <dbReference type="UniProtKB" id="P0C7B4"/>
    </source>
</evidence>
<evidence type="ECO:0000305" key="2"/>
<reference key="1">
    <citation type="journal article" date="2005" name="J. Bacteriol.">
        <title>Whole-genome sequencing of Staphylococcus haemolyticus uncovers the extreme plasticity of its genome and the evolution of human-colonizing staphylococcal species.</title>
        <authorList>
            <person name="Takeuchi F."/>
            <person name="Watanabe S."/>
            <person name="Baba T."/>
            <person name="Yuzawa H."/>
            <person name="Ito T."/>
            <person name="Morimoto Y."/>
            <person name="Kuroda M."/>
            <person name="Cui L."/>
            <person name="Takahashi M."/>
            <person name="Ankai A."/>
            <person name="Baba S."/>
            <person name="Fukui S."/>
            <person name="Lee J.C."/>
            <person name="Hiramatsu K."/>
        </authorList>
    </citation>
    <scope>NUCLEOTIDE SEQUENCE [LARGE SCALE GENOMIC DNA]</scope>
    <source>
        <strain>JCSC1435</strain>
    </source>
</reference>
<name>MAZE_STAHJ</name>
<proteinExistence type="inferred from homology"/>